<keyword id="KW-0002">3D-structure</keyword>
<keyword id="KW-0090">Biological rhythms</keyword>
<keyword id="KW-0963">Cytoplasm</keyword>
<keyword id="KW-0217">Developmental protein</keyword>
<keyword id="KW-0221">Differentiation</keyword>
<keyword id="KW-0287">Flowering</keyword>
<keyword id="KW-0539">Nucleus</keyword>
<keyword id="KW-0607">Phytochrome signaling pathway</keyword>
<keyword id="KW-1185">Reference proteome</keyword>
<evidence type="ECO:0000256" key="1">
    <source>
        <dbReference type="SAM" id="MobiDB-lite"/>
    </source>
</evidence>
<evidence type="ECO:0000269" key="2">
    <source>
    </source>
</evidence>
<evidence type="ECO:0000269" key="3">
    <source>
    </source>
</evidence>
<evidence type="ECO:0000269" key="4">
    <source>
    </source>
</evidence>
<evidence type="ECO:0000269" key="5">
    <source>
    </source>
</evidence>
<evidence type="ECO:0000269" key="6">
    <source>
    </source>
</evidence>
<evidence type="ECO:0000269" key="7">
    <source>
    </source>
</evidence>
<evidence type="ECO:0000269" key="8">
    <source>
    </source>
</evidence>
<evidence type="ECO:0000305" key="9"/>
<evidence type="ECO:0007829" key="10">
    <source>
        <dbReference type="PDB" id="7WA4"/>
    </source>
</evidence>
<gene>
    <name type="primary">GI</name>
    <name type="ordered locus">At1g22770</name>
    <name type="ORF">T22J18.6</name>
</gene>
<comment type="function">
    <text evidence="2 6 7">Involved in regulation of circadian rhythm and photoperiodic flowering. May play a role in maintenance of circadian amplitude and period length. Is involved in phytochrome B signaling. Stabilizes ADO3 and the circadian photoreceptor ADO1/ZTL. Regulates 'CONSTANS' (CO) in the long-day flowering pathway by modulating the ADO3-dependent protein stability of CDF1 and CDF2, but is not essential to activate CO transcription. Regulates, via the microRNA miR172, a CO-independent pathway that promotes photoperiodic flowering by inducing 'FLOWERING LOCUS T'.</text>
</comment>
<comment type="subunit">
    <text evidence="3 4 5 8">Interacts with SPY (PubMed:15155885). Interacts with ADO1 (via N-terminus) and ADO2 (PubMed:17704763). Interacts with ADO3 (via N-terminus) (PubMed:17704763, PubMed:17872410). Interacts (via N-terminus) with CDF1 (PubMed:17872410). Interacts (via N-terminus) with TCP4 (PubMed:28628608).</text>
</comment>
<comment type="interaction">
    <interactant intactId="EBI-446380">
        <id>Q9SQI2</id>
    </interactant>
    <interactant intactId="EBI-300691">
        <id>Q94BT6</id>
        <label>ADO1</label>
    </interactant>
    <organismsDiffer>false</organismsDiffer>
    <experiments>6</experiments>
</comment>
<comment type="interaction">
    <interactant intactId="EBI-446380">
        <id>Q9SQI2</id>
    </interactant>
    <interactant intactId="EBI-1015688">
        <id>Q8W420</id>
        <label>ADO2</label>
    </interactant>
    <organismsDiffer>false</organismsDiffer>
    <experiments>4</experiments>
</comment>
<comment type="interaction">
    <interactant intactId="EBI-446380">
        <id>Q9SQI2</id>
    </interactant>
    <interactant intactId="EBI-401228">
        <id>Q9C9W9</id>
        <label>ADO3</label>
    </interactant>
    <organismsDiffer>false</organismsDiffer>
    <experiments>11</experiments>
</comment>
<comment type="interaction">
    <interactant intactId="EBI-446380">
        <id>Q9SQI2</id>
    </interactant>
    <interactant intactId="EBI-763232">
        <id>O80931</id>
        <label>AS1</label>
    </interactant>
    <organismsDiffer>false</organismsDiffer>
    <experiments>3</experiments>
</comment>
<comment type="interaction">
    <interactant intactId="EBI-446380">
        <id>Q9SQI2</id>
    </interactant>
    <interactant intactId="EBI-1536051">
        <id>Q8W1E3</id>
        <label>CDF1</label>
    </interactant>
    <organismsDiffer>false</organismsDiffer>
    <experiments>3</experiments>
</comment>
<comment type="interaction">
    <interactant intactId="EBI-446380">
        <id>Q9SQI2</id>
    </interactant>
    <interactant intactId="EBI-2012188">
        <id>Q8RXD6</id>
        <label>HUB1</label>
    </interactant>
    <organismsDiffer>false</organismsDiffer>
    <experiments>3</experiments>
</comment>
<comment type="interaction">
    <interactant intactId="EBI-446380">
        <id>Q9SQI2</id>
    </interactant>
    <interactant intactId="EBI-2295525">
        <id>O24408</id>
        <label>IAA18</label>
    </interactant>
    <organismsDiffer>false</organismsDiffer>
    <experiments>3</experiments>
</comment>
<comment type="interaction">
    <interactant intactId="EBI-446380">
        <id>Q9SQI2</id>
    </interactant>
    <interactant intactId="EBI-3947418">
        <id>Q8LAL2</id>
        <label>IAA26</label>
    </interactant>
    <organismsDiffer>false</organismsDiffer>
    <experiments>3</experiments>
</comment>
<comment type="interaction">
    <interactant intactId="EBI-446380">
        <id>Q9SQI2</id>
    </interactant>
    <interactant intactId="EBI-530486">
        <id>P46639</id>
        <label>KNAT1</label>
    </interactant>
    <organismsDiffer>false</organismsDiffer>
    <experiments>3</experiments>
</comment>
<comment type="interaction">
    <interactant intactId="EBI-446380">
        <id>Q9SQI2</id>
    </interactant>
    <interactant intactId="EBI-1238013">
        <id>O22179</id>
        <label>MYB70</label>
    </interactant>
    <organismsDiffer>false</organismsDiffer>
    <experiments>3</experiments>
</comment>
<comment type="interaction">
    <interactant intactId="EBI-446380">
        <id>Q9SQI2</id>
    </interactant>
    <interactant intactId="EBI-25506855">
        <id>O23160</id>
        <label>MYB73</label>
    </interactant>
    <organismsDiffer>false</organismsDiffer>
    <experiments>3</experiments>
</comment>
<comment type="interaction">
    <interactant intactId="EBI-446380">
        <id>Q9SQI2</id>
    </interactant>
    <interactant intactId="EBI-15206702">
        <id>P82280</id>
        <label>RAV2</label>
    </interactant>
    <organismsDiffer>false</organismsDiffer>
    <experiments>2</experiments>
</comment>
<comment type="interaction">
    <interactant intactId="EBI-446380">
        <id>Q9SQI2</id>
    </interactant>
    <interactant intactId="EBI-446372">
        <id>Q96301</id>
        <label>SPY</label>
    </interactant>
    <organismsDiffer>false</organismsDiffer>
    <experiments>4</experiments>
</comment>
<comment type="interaction">
    <interactant intactId="EBI-446380">
        <id>Q9SQI2</id>
    </interactant>
    <interactant intactId="EBI-592058">
        <id>Q9FVC1</id>
        <label>SVP</label>
    </interactant>
    <organismsDiffer>false</organismsDiffer>
    <experiments>2</experiments>
</comment>
<comment type="interaction">
    <interactant intactId="EBI-446380">
        <id>Q9SQI2</id>
    </interactant>
    <interactant intactId="EBI-15221122">
        <id>Q9C6M5</id>
        <label>TEM1</label>
    </interactant>
    <organismsDiffer>false</organismsDiffer>
    <experiments>2</experiments>
</comment>
<comment type="interaction">
    <interactant intactId="EBI-446380">
        <id>Q9SQI2</id>
    </interactant>
    <interactant intactId="EBI-4426557">
        <id>Q84MB2</id>
        <label>TIFY8</label>
    </interactant>
    <organismsDiffer>false</organismsDiffer>
    <experiments>3</experiments>
</comment>
<comment type="interaction">
    <interactant intactId="EBI-446380">
        <id>Q9SQI2</id>
    </interactant>
    <interactant intactId="EBI-4424568">
        <id>Q9LVG2</id>
        <label>TOE2</label>
    </interactant>
    <organismsDiffer>false</organismsDiffer>
    <experiments>3</experiments>
</comment>
<comment type="subcellular location">
    <subcellularLocation>
        <location>Nucleus</location>
    </subcellularLocation>
    <subcellularLocation>
        <location>Cytoplasm</location>
    </subcellularLocation>
</comment>
<comment type="tissue specificity">
    <text>Widely expressed with highest levels in inflorescence apices, young flowers and young siliques.</text>
</comment>
<comment type="developmental stage">
    <text>Found at all stages.</text>
</comment>
<comment type="induction">
    <text evidence="4 5">Expressed with a circadian rhythm with the highest level 10 hours into the light and the lowest level at dawn. The peak of expression in long days is slightly lower, shifted later and the decrease is slower.</text>
</comment>
<comment type="similarity">
    <text evidence="9">Belongs to the GIGANTEA family.</text>
</comment>
<comment type="sequence caution" evidence="9">
    <conflict type="erroneous gene model prediction">
        <sequence resource="EMBL-CDS" id="AAC25507"/>
    </conflict>
</comment>
<comment type="sequence caution" evidence="9">
    <conflict type="erroneous gene model prediction">
        <sequence resource="EMBL-CDS" id="AAF00023"/>
    </conflict>
</comment>
<comment type="sequence caution" evidence="9">
    <conflict type="erroneous gene model prediction">
        <sequence resource="EMBL-CDS" id="CAA72908"/>
    </conflict>
</comment>
<proteinExistence type="evidence at protein level"/>
<protein>
    <recommendedName>
        <fullName>Protein GIGANTEA</fullName>
    </recommendedName>
</protein>
<sequence length="1173" mass="127876">MASSSSSERWIDGLQFSSLLWPPPRDPQQHKDQVVAYVEYFGQFTSEQFPDDIAELVRHQYPSTEKRLLDDVLAMFVLHHPEHGHAVILPIISCLIDGSLVYSKEAHPFASFISLVCPSSENDYSEQWALACGEILRILTHYNRPIYKTEQQNGDTERNCLSKATTSGSPTSEPKAGSPTQHERKPLRPLSPWISDILLAAPLGIRSDYFRWCSGVMGKYAAGELKPPTIASRGSGKHPQLMPSTPRWAVANGAGVILSVCDDEVARYETATLTAVAVPALLLPPPTTSLDEHLVAGLPALEPYARLFHRYYAIATPSATQRLLLGLLEAPPSWAPDALDAAVQLVELLRAAEDYASGVRLPRNWMHLHFLRAIGIAMSMRAGVAADAAAALLFRILSQPALLFPPLSQVEGVEIQHAPIGGYSSNYRKQIEVPAAEATIEATAQGIASMLCAHGPEVEWRICTIWEAAYGLIPLNSSAVDLPEIIVATPLQPPILSWNLYIPLLKVLEYLPRGSPSEACLMKIFVATVETILSRTFPPESSRELTRKARSSFTTRSATKNLAMSELRAMVHALFLESCAGVELASRLLFVVLTVCVSHEAQSSGSKRPRSEYASTTENIEANQPVSNNQTANRKSRNVKGQGPVAAFDSYVLAAVCALACEVQLYPMISGGGNFSNSAVAGTITKPVKINGSSKEYGAGIDSAISHTRRILAILEALFSLKPSSVGTPWSYSSSEIVAAAMVAAHISELFRRSKALTHALSGLMRCKWDKEIHKRASSLYNLIDVHSKVVASIVDKAEPLEAYLKNTPVQKDSVTCLNWKQENTCASTTCFDTAVTSASRTEMNPRGNHKYARHSDEGSGRPSEKGIKDFLLDASDLANFLTADRLAGFYCGTQKLLRSVLAEKPELSFSVVSLLWHKLIAAPEIQPTAESTSAQQGWRQVVDALCNVVSATPAKAAAAVVLQAERELQPWIAKDDEEGQKMWKINQRIVKVLVELMRNHDRPESLVILASASDLLLRATDGMLVDGEACTLPQLELLEATARAIQPVLAWGPSGLAVVDGLSNLLKCRLPATIRCLSHPSAHVRALSTSVLRDIMNQSSIPIKVTPKLPTTEKNGMNSPSYRFFNAASIDWKADIQNCLNWEAHSLLSTTMPTQFLDTAARELGCTISLSQ</sequence>
<name>GIGAN_ARATH</name>
<accession>Q9SQI2</accession>
<accession>O64381</accession>
<accession>O80545</accession>
<accession>Q9S7N0</accession>
<feature type="chain" id="PRO_0000087489" description="Protein GIGANTEA">
    <location>
        <begin position="1"/>
        <end position="1173"/>
    </location>
</feature>
<feature type="region of interest" description="Disordered" evidence="1">
    <location>
        <begin position="150"/>
        <end position="187"/>
    </location>
</feature>
<feature type="region of interest" description="Disordered" evidence="1">
    <location>
        <begin position="604"/>
        <end position="641"/>
    </location>
</feature>
<feature type="region of interest" description="Disordered" evidence="1">
    <location>
        <begin position="840"/>
        <end position="863"/>
    </location>
</feature>
<feature type="compositionally biased region" description="Polar residues" evidence="1">
    <location>
        <begin position="162"/>
        <end position="172"/>
    </location>
</feature>
<feature type="compositionally biased region" description="Polar residues" evidence="1">
    <location>
        <begin position="613"/>
        <end position="633"/>
    </location>
</feature>
<feature type="compositionally biased region" description="Basic and acidic residues" evidence="1">
    <location>
        <begin position="854"/>
        <end position="863"/>
    </location>
</feature>
<feature type="helix" evidence="10">
    <location>
        <begin position="10"/>
        <end position="13"/>
    </location>
</feature>
<feature type="helix" evidence="10">
    <location>
        <begin position="14"/>
        <end position="16"/>
    </location>
</feature>
<feature type="helix" evidence="10">
    <location>
        <begin position="18"/>
        <end position="20"/>
    </location>
</feature>
<feature type="helix" evidence="10">
    <location>
        <begin position="27"/>
        <end position="42"/>
    </location>
</feature>
<feature type="helix" evidence="10">
    <location>
        <begin position="49"/>
        <end position="60"/>
    </location>
</feature>
<feature type="helix" evidence="10">
    <location>
        <begin position="68"/>
        <end position="79"/>
    </location>
</feature>
<feature type="helix" evidence="10">
    <location>
        <begin position="81"/>
        <end position="83"/>
    </location>
</feature>
<feature type="helix" evidence="10">
    <location>
        <begin position="84"/>
        <end position="97"/>
    </location>
</feature>
<feature type="strand" evidence="10">
    <location>
        <begin position="98"/>
        <end position="100"/>
    </location>
</feature>
<feature type="helix" evidence="10">
    <location>
        <begin position="107"/>
        <end position="116"/>
    </location>
</feature>
<feature type="helix" evidence="10">
    <location>
        <begin position="126"/>
        <end position="141"/>
    </location>
</feature>
<feature type="helix" evidence="10">
    <location>
        <begin position="191"/>
        <end position="199"/>
    </location>
</feature>
<feature type="helix" evidence="10">
    <location>
        <begin position="203"/>
        <end position="213"/>
    </location>
</feature>
<feature type="helix" evidence="10">
    <location>
        <begin position="253"/>
        <end position="267"/>
    </location>
</feature>
<feature type="helix" evidence="10">
    <location>
        <begin position="273"/>
        <end position="282"/>
    </location>
</feature>
<feature type="helix" evidence="10">
    <location>
        <begin position="290"/>
        <end position="294"/>
    </location>
</feature>
<feature type="helix" evidence="10">
    <location>
        <begin position="305"/>
        <end position="314"/>
    </location>
</feature>
<feature type="helix" evidence="10">
    <location>
        <begin position="317"/>
        <end position="328"/>
    </location>
</feature>
<feature type="turn" evidence="10">
    <location>
        <begin position="332"/>
        <end position="334"/>
    </location>
</feature>
<feature type="helix" evidence="10">
    <location>
        <begin position="338"/>
        <end position="355"/>
    </location>
</feature>
<feature type="helix" evidence="10">
    <location>
        <begin position="365"/>
        <end position="369"/>
    </location>
</feature>
<feature type="helix" evidence="10">
    <location>
        <begin position="371"/>
        <end position="379"/>
    </location>
</feature>
<feature type="helix" evidence="10">
    <location>
        <begin position="384"/>
        <end position="398"/>
    </location>
</feature>
<feature type="helix" evidence="10">
    <location>
        <begin position="438"/>
        <end position="454"/>
    </location>
</feature>
<feature type="helix" evidence="10">
    <location>
        <begin position="456"/>
        <end position="469"/>
    </location>
</feature>
<feature type="helix" evidence="10">
    <location>
        <begin position="498"/>
        <end position="510"/>
    </location>
</feature>
<feature type="helix" evidence="10">
    <location>
        <begin position="516"/>
        <end position="533"/>
    </location>
</feature>
<feature type="helix" evidence="10">
    <location>
        <begin position="566"/>
        <end position="576"/>
    </location>
</feature>
<feature type="helix" evidence="10">
    <location>
        <begin position="582"/>
        <end position="598"/>
    </location>
</feature>
<feature type="helix" evidence="10">
    <location>
        <begin position="644"/>
        <end position="664"/>
    </location>
</feature>
<feature type="helix" evidence="10">
    <location>
        <begin position="703"/>
        <end position="720"/>
    </location>
</feature>
<feature type="helix" evidence="10">
    <location>
        <begin position="740"/>
        <end position="751"/>
    </location>
</feature>
<feature type="helix" evidence="10">
    <location>
        <begin position="755"/>
        <end position="765"/>
    </location>
</feature>
<feature type="helix" evidence="10">
    <location>
        <begin position="771"/>
        <end position="788"/>
    </location>
</feature>
<dbReference type="EMBL" id="AJ133786">
    <property type="protein sequence ID" value="CAB56039.1"/>
    <property type="molecule type" value="mRNA"/>
</dbReference>
<dbReference type="EMBL" id="AF105064">
    <property type="protein sequence ID" value="AAF00092.1"/>
    <property type="molecule type" value="mRNA"/>
</dbReference>
<dbReference type="EMBL" id="AF076686">
    <property type="protein sequence ID" value="AAF00023.1"/>
    <property type="status" value="ALT_SEQ"/>
    <property type="molecule type" value="Genomic_DNA"/>
</dbReference>
<dbReference type="EMBL" id="Y12227">
    <property type="protein sequence ID" value="CAA72908.1"/>
    <property type="status" value="ALT_SEQ"/>
    <property type="molecule type" value="Genomic_DNA"/>
</dbReference>
<dbReference type="EMBL" id="AC003979">
    <property type="protein sequence ID" value="AAC25507.1"/>
    <property type="status" value="ALT_SEQ"/>
    <property type="molecule type" value="Genomic_DNA"/>
</dbReference>
<dbReference type="EMBL" id="CP002684">
    <property type="protein sequence ID" value="AEE30286.1"/>
    <property type="molecule type" value="Genomic_DNA"/>
</dbReference>
<dbReference type="PIR" id="T52575">
    <property type="entry name" value="T52575"/>
</dbReference>
<dbReference type="RefSeq" id="NP_564180.1">
    <property type="nucleotide sequence ID" value="NM_102124.3"/>
</dbReference>
<dbReference type="PDB" id="7WA4">
    <property type="method" value="X-ray"/>
    <property type="resolution" value="3.50 A"/>
    <property type="chains" value="A=1-813"/>
</dbReference>
<dbReference type="PDBsum" id="7WA4"/>
<dbReference type="SMR" id="Q9SQI2"/>
<dbReference type="BioGRID" id="24122">
    <property type="interactions" value="29"/>
</dbReference>
<dbReference type="DIP" id="DIP-31718N"/>
<dbReference type="FunCoup" id="Q9SQI2">
    <property type="interactions" value="76"/>
</dbReference>
<dbReference type="IntAct" id="Q9SQI2">
    <property type="interactions" value="19"/>
</dbReference>
<dbReference type="STRING" id="3702.Q9SQI2"/>
<dbReference type="GlyGen" id="Q9SQI2">
    <property type="glycosylation" value="1 site"/>
</dbReference>
<dbReference type="iPTMnet" id="Q9SQI2"/>
<dbReference type="PaxDb" id="3702-AT1G22770.1"/>
<dbReference type="ProteomicsDB" id="220762"/>
<dbReference type="EnsemblPlants" id="AT1G22770.1">
    <property type="protein sequence ID" value="AT1G22770.1"/>
    <property type="gene ID" value="AT1G22770"/>
</dbReference>
<dbReference type="GeneID" id="838883"/>
<dbReference type="Gramene" id="AT1G22770.1">
    <property type="protein sequence ID" value="AT1G22770.1"/>
    <property type="gene ID" value="AT1G22770"/>
</dbReference>
<dbReference type="KEGG" id="ath:AT1G22770"/>
<dbReference type="Araport" id="AT1G22770"/>
<dbReference type="TAIR" id="AT1G22770">
    <property type="gene designation" value="GI"/>
</dbReference>
<dbReference type="eggNOG" id="ENOG502QU75">
    <property type="taxonomic scope" value="Eukaryota"/>
</dbReference>
<dbReference type="HOGENOM" id="CLU_283623_0_0_1"/>
<dbReference type="InParanoid" id="Q9SQI2"/>
<dbReference type="OMA" id="QCKWDAE"/>
<dbReference type="PhylomeDB" id="Q9SQI2"/>
<dbReference type="PRO" id="PR:Q9SQI2"/>
<dbReference type="Proteomes" id="UP000006548">
    <property type="component" value="Chromosome 1"/>
</dbReference>
<dbReference type="ExpressionAtlas" id="Q9SQI2">
    <property type="expression patterns" value="baseline and differential"/>
</dbReference>
<dbReference type="GO" id="GO:0005737">
    <property type="term" value="C:cytoplasm"/>
    <property type="evidence" value="ECO:0007669"/>
    <property type="project" value="UniProtKB-SubCell"/>
</dbReference>
<dbReference type="GO" id="GO:0005654">
    <property type="term" value="C:nucleoplasm"/>
    <property type="evidence" value="ECO:0000314"/>
    <property type="project" value="TAIR"/>
</dbReference>
<dbReference type="GO" id="GO:0005634">
    <property type="term" value="C:nucleus"/>
    <property type="evidence" value="ECO:0000314"/>
    <property type="project" value="TAIR"/>
</dbReference>
<dbReference type="GO" id="GO:0030154">
    <property type="term" value="P:cell differentiation"/>
    <property type="evidence" value="ECO:0007669"/>
    <property type="project" value="UniProtKB-KW"/>
</dbReference>
<dbReference type="GO" id="GO:0007623">
    <property type="term" value="P:circadian rhythm"/>
    <property type="evidence" value="ECO:0000314"/>
    <property type="project" value="TAIR"/>
</dbReference>
<dbReference type="GO" id="GO:0009908">
    <property type="term" value="P:flower development"/>
    <property type="evidence" value="ECO:0000304"/>
    <property type="project" value="TAIR"/>
</dbReference>
<dbReference type="GO" id="GO:0048578">
    <property type="term" value="P:positive regulation of long-day photoperiodism, flowering"/>
    <property type="evidence" value="ECO:0000315"/>
    <property type="project" value="TAIR"/>
</dbReference>
<dbReference type="GO" id="GO:0009585">
    <property type="term" value="P:red, far-red light phototransduction"/>
    <property type="evidence" value="ECO:0007669"/>
    <property type="project" value="UniProtKB-KW"/>
</dbReference>
<dbReference type="GO" id="GO:0042752">
    <property type="term" value="P:regulation of circadian rhythm"/>
    <property type="evidence" value="ECO:0000315"/>
    <property type="project" value="TAIR"/>
</dbReference>
<dbReference type="GO" id="GO:0006355">
    <property type="term" value="P:regulation of DNA-templated transcription"/>
    <property type="evidence" value="ECO:0000314"/>
    <property type="project" value="TAIR"/>
</dbReference>
<dbReference type="GO" id="GO:0009637">
    <property type="term" value="P:response to blue light"/>
    <property type="evidence" value="ECO:0000314"/>
    <property type="project" value="TAIR"/>
</dbReference>
<dbReference type="GO" id="GO:0009409">
    <property type="term" value="P:response to cold"/>
    <property type="evidence" value="ECO:0000315"/>
    <property type="project" value="TAIR"/>
</dbReference>
<dbReference type="GO" id="GO:0010218">
    <property type="term" value="P:response to far red light"/>
    <property type="evidence" value="ECO:0000315"/>
    <property type="project" value="TAIR"/>
</dbReference>
<dbReference type="GO" id="GO:0042542">
    <property type="term" value="P:response to hydrogen peroxide"/>
    <property type="evidence" value="ECO:0000315"/>
    <property type="project" value="TAIR"/>
</dbReference>
<dbReference type="GO" id="GO:0010378">
    <property type="term" value="P:temperature compensation of the circadian clock"/>
    <property type="evidence" value="ECO:0000315"/>
    <property type="project" value="TAIR"/>
</dbReference>
<dbReference type="InterPro" id="IPR026211">
    <property type="entry name" value="GIGANTEA"/>
</dbReference>
<dbReference type="PANTHER" id="PTHR36319">
    <property type="entry name" value="PROTEIN GIGANTEA"/>
    <property type="match status" value="1"/>
</dbReference>
<dbReference type="PANTHER" id="PTHR36319:SF1">
    <property type="entry name" value="PROTEIN GIGANTEA"/>
    <property type="match status" value="1"/>
</dbReference>
<dbReference type="PRINTS" id="PR02081">
    <property type="entry name" value="GIGANTEA"/>
</dbReference>
<reference key="1">
    <citation type="journal article" date="1999" name="EMBO J.">
        <title>GIGANTEA: a circadian clock-controlled gene that regulates photoperiodic flowering in Arabidopsis and encodes a protein with several possible membrane-spanning domains.</title>
        <authorList>
            <person name="Fowler S."/>
            <person name="Lee K."/>
            <person name="Onouchi H."/>
            <person name="Samach A."/>
            <person name="Richardson K."/>
            <person name="Morris B."/>
            <person name="Coupland G."/>
            <person name="Putterill J."/>
        </authorList>
    </citation>
    <scope>NUCLEOTIDE SEQUENCE [MRNA]</scope>
    <source>
        <strain>cv. Columbia</strain>
    </source>
</reference>
<reference key="2">
    <citation type="journal article" date="1999" name="Science">
        <title>Control of circadian rhythms and photoperiodic flowering by the Arabidopsis GIGANTEA gene.</title>
        <authorList>
            <person name="Park D.H."/>
            <person name="Somers D.E."/>
            <person name="Kim Y.S."/>
            <person name="Choy Y.H."/>
            <person name="Lim H.K."/>
            <person name="Soh M.S."/>
            <person name="Kim H.J."/>
            <person name="Kay S.A."/>
            <person name="Nam H.G."/>
        </authorList>
    </citation>
    <scope>NUCLEOTIDE SEQUENCE [MRNA]</scope>
    <source>
        <strain>cv. Columbia</strain>
        <tissue>Leaf</tissue>
        <tissue>Stem</tissue>
    </source>
</reference>
<reference key="3">
    <citation type="journal article" date="1997" name="FEBS Lett.">
        <title>Sequence analysis of a 24-kb contiguous genomic region at the Arabidopsis thaliana PFL locus on chromosome 1.</title>
        <authorList>
            <person name="Terryn N."/>
            <person name="Neyt P."/>
            <person name="de Clercq R."/>
            <person name="de Keyser A."/>
            <person name="van den Daele H."/>
            <person name="Ardiles W."/>
            <person name="Dehais P."/>
            <person name="Rouze P."/>
            <person name="Gielen J."/>
            <person name="Villarroel R."/>
            <person name="van Montagu M."/>
        </authorList>
    </citation>
    <scope>NUCLEOTIDE SEQUENCE [GENOMIC DNA]</scope>
    <source>
        <strain>cv. Columbia</strain>
    </source>
</reference>
<reference key="4">
    <citation type="journal article" date="2000" name="Nature">
        <title>Sequence and analysis of chromosome 1 of the plant Arabidopsis thaliana.</title>
        <authorList>
            <person name="Theologis A."/>
            <person name="Ecker J.R."/>
            <person name="Palm C.J."/>
            <person name="Federspiel N.A."/>
            <person name="Kaul S."/>
            <person name="White O."/>
            <person name="Alonso J."/>
            <person name="Altafi H."/>
            <person name="Araujo R."/>
            <person name="Bowman C.L."/>
            <person name="Brooks S.Y."/>
            <person name="Buehler E."/>
            <person name="Chan A."/>
            <person name="Chao Q."/>
            <person name="Chen H."/>
            <person name="Cheuk R.F."/>
            <person name="Chin C.W."/>
            <person name="Chung M.K."/>
            <person name="Conn L."/>
            <person name="Conway A.B."/>
            <person name="Conway A.R."/>
            <person name="Creasy T.H."/>
            <person name="Dewar K."/>
            <person name="Dunn P."/>
            <person name="Etgu P."/>
            <person name="Feldblyum T.V."/>
            <person name="Feng J.-D."/>
            <person name="Fong B."/>
            <person name="Fujii C.Y."/>
            <person name="Gill J.E."/>
            <person name="Goldsmith A.D."/>
            <person name="Haas B."/>
            <person name="Hansen N.F."/>
            <person name="Hughes B."/>
            <person name="Huizar L."/>
            <person name="Hunter J.L."/>
            <person name="Jenkins J."/>
            <person name="Johnson-Hopson C."/>
            <person name="Khan S."/>
            <person name="Khaykin E."/>
            <person name="Kim C.J."/>
            <person name="Koo H.L."/>
            <person name="Kremenetskaia I."/>
            <person name="Kurtz D.B."/>
            <person name="Kwan A."/>
            <person name="Lam B."/>
            <person name="Langin-Hooper S."/>
            <person name="Lee A."/>
            <person name="Lee J.M."/>
            <person name="Lenz C.A."/>
            <person name="Li J.H."/>
            <person name="Li Y.-P."/>
            <person name="Lin X."/>
            <person name="Liu S.X."/>
            <person name="Liu Z.A."/>
            <person name="Luros J.S."/>
            <person name="Maiti R."/>
            <person name="Marziali A."/>
            <person name="Militscher J."/>
            <person name="Miranda M."/>
            <person name="Nguyen M."/>
            <person name="Nierman W.C."/>
            <person name="Osborne B.I."/>
            <person name="Pai G."/>
            <person name="Peterson J."/>
            <person name="Pham P.K."/>
            <person name="Rizzo M."/>
            <person name="Rooney T."/>
            <person name="Rowley D."/>
            <person name="Sakano H."/>
            <person name="Salzberg S.L."/>
            <person name="Schwartz J.R."/>
            <person name="Shinn P."/>
            <person name="Southwick A.M."/>
            <person name="Sun H."/>
            <person name="Tallon L.J."/>
            <person name="Tambunga G."/>
            <person name="Toriumi M.J."/>
            <person name="Town C.D."/>
            <person name="Utterback T."/>
            <person name="Van Aken S."/>
            <person name="Vaysberg M."/>
            <person name="Vysotskaia V.S."/>
            <person name="Walker M."/>
            <person name="Wu D."/>
            <person name="Yu G."/>
            <person name="Fraser C.M."/>
            <person name="Venter J.C."/>
            <person name="Davis R.W."/>
        </authorList>
    </citation>
    <scope>NUCLEOTIDE SEQUENCE [LARGE SCALE GENOMIC DNA]</scope>
    <source>
        <strain>cv. Columbia</strain>
    </source>
</reference>
<reference key="5">
    <citation type="journal article" date="2017" name="Plant J.">
        <title>Araport11: a complete reannotation of the Arabidopsis thaliana reference genome.</title>
        <authorList>
            <person name="Cheng C.Y."/>
            <person name="Krishnakumar V."/>
            <person name="Chan A.P."/>
            <person name="Thibaud-Nissen F."/>
            <person name="Schobel S."/>
            <person name="Town C.D."/>
        </authorList>
    </citation>
    <scope>GENOME REANNOTATION</scope>
    <source>
        <strain>cv. Columbia</strain>
    </source>
</reference>
<reference key="6">
    <citation type="journal article" date="2000" name="Proc. Natl. Acad. Sci. U.S.A.">
        <title>GIGANTEA is a nuclear protein involved in phytochrome signaling in Arabidopsis.</title>
        <authorList>
            <person name="Huq E."/>
            <person name="Tepperman J.M."/>
            <person name="Quail P.H."/>
        </authorList>
    </citation>
    <scope>FUNCTION</scope>
    <scope>SUBCELLULAR LOCATION</scope>
</reference>
<reference key="7">
    <citation type="journal article" date="2004" name="Plant Cell">
        <title>SPINDLY and GIGANTEA interact and act in Arabidopsis thaliana pathways involved in light responses, flowering, and rhythms in cotyledon movements.</title>
        <authorList>
            <person name="Tseng T.-S."/>
            <person name="Salome P.A."/>
            <person name="McClung C.R."/>
            <person name="Olszewski N.E."/>
        </authorList>
    </citation>
    <scope>INTERACTION WITH SPY</scope>
</reference>
<reference key="8">
    <citation type="journal article" date="2007" name="Nature">
        <title>ZEITLUPE is a circadian photoreceptor stabilized by GIGANTEA in blue light.</title>
        <authorList>
            <person name="Kim W.Y."/>
            <person name="Fujiwara S."/>
            <person name="Suh S.S."/>
            <person name="Kim J."/>
            <person name="Kim Y."/>
            <person name="Han L."/>
            <person name="David K."/>
            <person name="Putterill J."/>
            <person name="Nam H.G."/>
            <person name="Somers D.E."/>
        </authorList>
    </citation>
    <scope>INTERACTION WITH ADO1; ADO2 AND ADO3</scope>
    <scope>SUBCELLULAR LOCATION</scope>
    <scope>INDUCTION</scope>
</reference>
<reference key="9">
    <citation type="journal article" date="2007" name="Plant Cell">
        <title>The GIGANTEA-regulated microRNA172 mediates photoperiodic flowering independent of CONSTANS in Arabidopsis.</title>
        <authorList>
            <person name="Jung J.H."/>
            <person name="Seo Y.H."/>
            <person name="Seo P.J."/>
            <person name="Reyes J.L."/>
            <person name="Yun J."/>
            <person name="Chua N.H."/>
            <person name="Park C.M."/>
        </authorList>
    </citation>
    <scope>FUNCTION</scope>
</reference>
<reference key="10">
    <citation type="journal article" date="2007" name="Science">
        <title>FKF1 and GIGANTEA complex formation is required for day-length measurement in Arabidopsis.</title>
        <authorList>
            <person name="Sawa M."/>
            <person name="Nusinow D.A."/>
            <person name="Kay S.A."/>
            <person name="Imaizumi T."/>
        </authorList>
    </citation>
    <scope>INTERACTION WITH ADO3 AND CDF1</scope>
    <scope>INDUCTION</scope>
</reference>
<reference key="11">
    <citation type="journal article" date="2009" name="Dev. Cell">
        <title>Arabidopsis DOF transcription factors act redundantly to reduce CONSTANS expression and are essential for a photoperiodic flowering response.</title>
        <authorList>
            <person name="Fornara F."/>
            <person name="Panigrahi K.C."/>
            <person name="Gissot L."/>
            <person name="Sauerbrunn N."/>
            <person name="Ruehl M."/>
            <person name="Jarillo J.A."/>
            <person name="Coupland G."/>
        </authorList>
    </citation>
    <scope>FUNCTION</scope>
</reference>
<reference key="12">
    <citation type="journal article" date="2017" name="PLoS Genet.">
        <title>TCP4-dependent induction of CONSTANS transcription requires GIGANTEA in photoperiodic flowering in Arabidopsis.</title>
        <authorList>
            <person name="Kubota A."/>
            <person name="Ito S."/>
            <person name="Shim J.S."/>
            <person name="Johnson R.S."/>
            <person name="Song Y.H."/>
            <person name="Breton G."/>
            <person name="Goralogia G.S."/>
            <person name="Kwon M.S."/>
            <person name="Laboy Cintron D."/>
            <person name="Koyama T."/>
            <person name="Ohme-Takagi M."/>
            <person name="Pruneda-Paz J.L."/>
            <person name="Kay S.A."/>
            <person name="MacCoss M.J."/>
            <person name="Imaizumi T."/>
        </authorList>
    </citation>
    <scope>INTERACTION WITH TCP4</scope>
</reference>
<organism>
    <name type="scientific">Arabidopsis thaliana</name>
    <name type="common">Mouse-ear cress</name>
    <dbReference type="NCBI Taxonomy" id="3702"/>
    <lineage>
        <taxon>Eukaryota</taxon>
        <taxon>Viridiplantae</taxon>
        <taxon>Streptophyta</taxon>
        <taxon>Embryophyta</taxon>
        <taxon>Tracheophyta</taxon>
        <taxon>Spermatophyta</taxon>
        <taxon>Magnoliopsida</taxon>
        <taxon>eudicotyledons</taxon>
        <taxon>Gunneridae</taxon>
        <taxon>Pentapetalae</taxon>
        <taxon>rosids</taxon>
        <taxon>malvids</taxon>
        <taxon>Brassicales</taxon>
        <taxon>Brassicaceae</taxon>
        <taxon>Camelineae</taxon>
        <taxon>Arabidopsis</taxon>
    </lineage>
</organism>